<accession>Q2JJQ9</accession>
<protein>
    <recommendedName>
        <fullName evidence="1">Triosephosphate isomerase</fullName>
        <shortName evidence="1">TIM</shortName>
        <shortName evidence="1">TPI</shortName>
        <ecNumber evidence="1">5.3.1.1</ecNumber>
    </recommendedName>
    <alternativeName>
        <fullName evidence="1">Triose-phosphate isomerase</fullName>
    </alternativeName>
</protein>
<organism>
    <name type="scientific">Synechococcus sp. (strain JA-2-3B'a(2-13))</name>
    <name type="common">Cyanobacteria bacterium Yellowstone B-Prime</name>
    <dbReference type="NCBI Taxonomy" id="321332"/>
    <lineage>
        <taxon>Bacteria</taxon>
        <taxon>Bacillati</taxon>
        <taxon>Cyanobacteriota</taxon>
        <taxon>Cyanophyceae</taxon>
        <taxon>Synechococcales</taxon>
        <taxon>Synechococcaceae</taxon>
        <taxon>Synechococcus</taxon>
    </lineage>
</organism>
<gene>
    <name evidence="1" type="primary">tpiA</name>
    <name type="ordered locus">CYB_2157</name>
</gene>
<feature type="chain" id="PRO_0000307586" description="Triosephosphate isomerase">
    <location>
        <begin position="1"/>
        <end position="250"/>
    </location>
</feature>
<feature type="active site" description="Electrophile" evidence="1">
    <location>
        <position position="100"/>
    </location>
</feature>
<feature type="active site" description="Proton acceptor" evidence="1">
    <location>
        <position position="169"/>
    </location>
</feature>
<feature type="binding site" evidence="1">
    <location>
        <begin position="9"/>
        <end position="11"/>
    </location>
    <ligand>
        <name>substrate</name>
    </ligand>
</feature>
<feature type="binding site" evidence="1">
    <location>
        <position position="175"/>
    </location>
    <ligand>
        <name>substrate</name>
    </ligand>
</feature>
<feature type="binding site" evidence="1">
    <location>
        <position position="208"/>
    </location>
    <ligand>
        <name>substrate</name>
    </ligand>
</feature>
<feature type="binding site" evidence="1">
    <location>
        <begin position="229"/>
        <end position="230"/>
    </location>
    <ligand>
        <name>substrate</name>
    </ligand>
</feature>
<reference key="1">
    <citation type="journal article" date="2007" name="ISME J.">
        <title>Population level functional diversity in a microbial community revealed by comparative genomic and metagenomic analyses.</title>
        <authorList>
            <person name="Bhaya D."/>
            <person name="Grossman A.R."/>
            <person name="Steunou A.-S."/>
            <person name="Khuri N."/>
            <person name="Cohan F.M."/>
            <person name="Hamamura N."/>
            <person name="Melendrez M.C."/>
            <person name="Bateson M.M."/>
            <person name="Ward D.M."/>
            <person name="Heidelberg J.F."/>
        </authorList>
    </citation>
    <scope>NUCLEOTIDE SEQUENCE [LARGE SCALE GENOMIC DNA]</scope>
    <source>
        <strain>JA-2-3B'a(2-13)</strain>
    </source>
</reference>
<comment type="function">
    <text evidence="1">Involved in the gluconeogenesis. Catalyzes stereospecifically the conversion of dihydroxyacetone phosphate (DHAP) to D-glyceraldehyde-3-phosphate (G3P).</text>
</comment>
<comment type="catalytic activity">
    <reaction evidence="1">
        <text>D-glyceraldehyde 3-phosphate = dihydroxyacetone phosphate</text>
        <dbReference type="Rhea" id="RHEA:18585"/>
        <dbReference type="ChEBI" id="CHEBI:57642"/>
        <dbReference type="ChEBI" id="CHEBI:59776"/>
        <dbReference type="EC" id="5.3.1.1"/>
    </reaction>
</comment>
<comment type="pathway">
    <text evidence="1">Carbohydrate biosynthesis; gluconeogenesis.</text>
</comment>
<comment type="pathway">
    <text evidence="1">Carbohydrate degradation; glycolysis; D-glyceraldehyde 3-phosphate from glycerone phosphate: step 1/1.</text>
</comment>
<comment type="subunit">
    <text evidence="1">Homodimer.</text>
</comment>
<comment type="subcellular location">
    <subcellularLocation>
        <location evidence="1">Cytoplasm</location>
    </subcellularLocation>
</comment>
<comment type="similarity">
    <text evidence="1">Belongs to the triosephosphate isomerase family.</text>
</comment>
<sequence>MRPILIAGNWKMHKTQAEAREFLRELGLALRSSPSGSASQRQIILCVPFTDLAVVAEQSRGSDIAVGAQNLHWEDQGAFTGEISGPMLAELGVRYVIVGHSERRQYFGETDETVNRRLAAAQRHGLTPILCVGESQQQREQGLTESWIVGQLDRALQGIDLENLVIAYEPIWAIGTGQTCAAQEANRVIGLIRQHLGNAQLPILYGGSVKAGNIDELMAQPEIDGVLVGGASLDPQEFARIVNFQALAPA</sequence>
<name>TPIS_SYNJB</name>
<proteinExistence type="inferred from homology"/>
<dbReference type="EC" id="5.3.1.1" evidence="1"/>
<dbReference type="EMBL" id="CP000240">
    <property type="protein sequence ID" value="ABD03103.1"/>
    <property type="molecule type" value="Genomic_DNA"/>
</dbReference>
<dbReference type="RefSeq" id="WP_011433738.1">
    <property type="nucleotide sequence ID" value="NC_007776.1"/>
</dbReference>
<dbReference type="SMR" id="Q2JJQ9"/>
<dbReference type="STRING" id="321332.CYB_2157"/>
<dbReference type="KEGG" id="cyb:CYB_2157"/>
<dbReference type="eggNOG" id="COG0149">
    <property type="taxonomic scope" value="Bacteria"/>
</dbReference>
<dbReference type="HOGENOM" id="CLU_024251_2_3_3"/>
<dbReference type="OrthoDB" id="9809429at2"/>
<dbReference type="UniPathway" id="UPA00109">
    <property type="reaction ID" value="UER00189"/>
</dbReference>
<dbReference type="UniPathway" id="UPA00138"/>
<dbReference type="Proteomes" id="UP000001938">
    <property type="component" value="Chromosome"/>
</dbReference>
<dbReference type="GO" id="GO:0005829">
    <property type="term" value="C:cytosol"/>
    <property type="evidence" value="ECO:0007669"/>
    <property type="project" value="TreeGrafter"/>
</dbReference>
<dbReference type="GO" id="GO:0004807">
    <property type="term" value="F:triose-phosphate isomerase activity"/>
    <property type="evidence" value="ECO:0007669"/>
    <property type="project" value="UniProtKB-UniRule"/>
</dbReference>
<dbReference type="GO" id="GO:0006094">
    <property type="term" value="P:gluconeogenesis"/>
    <property type="evidence" value="ECO:0007669"/>
    <property type="project" value="UniProtKB-UniRule"/>
</dbReference>
<dbReference type="GO" id="GO:0046166">
    <property type="term" value="P:glyceraldehyde-3-phosphate biosynthetic process"/>
    <property type="evidence" value="ECO:0007669"/>
    <property type="project" value="TreeGrafter"/>
</dbReference>
<dbReference type="GO" id="GO:0019563">
    <property type="term" value="P:glycerol catabolic process"/>
    <property type="evidence" value="ECO:0007669"/>
    <property type="project" value="TreeGrafter"/>
</dbReference>
<dbReference type="GO" id="GO:0006096">
    <property type="term" value="P:glycolytic process"/>
    <property type="evidence" value="ECO:0007669"/>
    <property type="project" value="UniProtKB-UniRule"/>
</dbReference>
<dbReference type="CDD" id="cd00311">
    <property type="entry name" value="TIM"/>
    <property type="match status" value="1"/>
</dbReference>
<dbReference type="FunFam" id="3.20.20.70:FF:000016">
    <property type="entry name" value="Triosephosphate isomerase"/>
    <property type="match status" value="1"/>
</dbReference>
<dbReference type="Gene3D" id="3.20.20.70">
    <property type="entry name" value="Aldolase class I"/>
    <property type="match status" value="1"/>
</dbReference>
<dbReference type="HAMAP" id="MF_00147_B">
    <property type="entry name" value="TIM_B"/>
    <property type="match status" value="1"/>
</dbReference>
<dbReference type="InterPro" id="IPR013785">
    <property type="entry name" value="Aldolase_TIM"/>
</dbReference>
<dbReference type="InterPro" id="IPR035990">
    <property type="entry name" value="TIM_sf"/>
</dbReference>
<dbReference type="InterPro" id="IPR022896">
    <property type="entry name" value="TrioseP_Isoase_bac/euk"/>
</dbReference>
<dbReference type="InterPro" id="IPR000652">
    <property type="entry name" value="Triosephosphate_isomerase"/>
</dbReference>
<dbReference type="InterPro" id="IPR020861">
    <property type="entry name" value="Triosephosphate_isomerase_AS"/>
</dbReference>
<dbReference type="NCBIfam" id="TIGR00419">
    <property type="entry name" value="tim"/>
    <property type="match status" value="1"/>
</dbReference>
<dbReference type="PANTHER" id="PTHR21139">
    <property type="entry name" value="TRIOSEPHOSPHATE ISOMERASE"/>
    <property type="match status" value="1"/>
</dbReference>
<dbReference type="PANTHER" id="PTHR21139:SF42">
    <property type="entry name" value="TRIOSEPHOSPHATE ISOMERASE"/>
    <property type="match status" value="1"/>
</dbReference>
<dbReference type="Pfam" id="PF00121">
    <property type="entry name" value="TIM"/>
    <property type="match status" value="1"/>
</dbReference>
<dbReference type="SUPFAM" id="SSF51351">
    <property type="entry name" value="Triosephosphate isomerase (TIM)"/>
    <property type="match status" value="1"/>
</dbReference>
<dbReference type="PROSITE" id="PS00171">
    <property type="entry name" value="TIM_1"/>
    <property type="match status" value="1"/>
</dbReference>
<dbReference type="PROSITE" id="PS51440">
    <property type="entry name" value="TIM_2"/>
    <property type="match status" value="1"/>
</dbReference>
<keyword id="KW-0963">Cytoplasm</keyword>
<keyword id="KW-0312">Gluconeogenesis</keyword>
<keyword id="KW-0324">Glycolysis</keyword>
<keyword id="KW-0413">Isomerase</keyword>
<keyword id="KW-1185">Reference proteome</keyword>
<evidence type="ECO:0000255" key="1">
    <source>
        <dbReference type="HAMAP-Rule" id="MF_00147"/>
    </source>
</evidence>